<evidence type="ECO:0000255" key="1">
    <source>
        <dbReference type="HAMAP-Rule" id="MF_01318"/>
    </source>
</evidence>
<evidence type="ECO:0000305" key="2"/>
<gene>
    <name evidence="1" type="primary">rplA</name>
    <name type="ordered locus">PSPA7_0827</name>
</gene>
<name>RL1_PSEP7</name>
<accession>A6UZH8</accession>
<organism>
    <name type="scientific">Pseudomonas paraeruginosa (strain DSM 24068 / PA7)</name>
    <name type="common">Pseudomonas aeruginosa (strain PA7)</name>
    <dbReference type="NCBI Taxonomy" id="381754"/>
    <lineage>
        <taxon>Bacteria</taxon>
        <taxon>Pseudomonadati</taxon>
        <taxon>Pseudomonadota</taxon>
        <taxon>Gammaproteobacteria</taxon>
        <taxon>Pseudomonadales</taxon>
        <taxon>Pseudomonadaceae</taxon>
        <taxon>Pseudomonas</taxon>
        <taxon>Pseudomonas paraeruginosa</taxon>
    </lineage>
</organism>
<proteinExistence type="inferred from homology"/>
<feature type="chain" id="PRO_1000051913" description="Large ribosomal subunit protein uL1">
    <location>
        <begin position="1"/>
        <end position="231"/>
    </location>
</feature>
<dbReference type="EMBL" id="CP000744">
    <property type="protein sequence ID" value="ABR84305.1"/>
    <property type="molecule type" value="Genomic_DNA"/>
</dbReference>
<dbReference type="RefSeq" id="WP_003093749.1">
    <property type="nucleotide sequence ID" value="NC_009656.1"/>
</dbReference>
<dbReference type="SMR" id="A6UZH8"/>
<dbReference type="GeneID" id="77219188"/>
<dbReference type="KEGG" id="pap:PSPA7_0827"/>
<dbReference type="HOGENOM" id="CLU_062853_0_0_6"/>
<dbReference type="Proteomes" id="UP000001582">
    <property type="component" value="Chromosome"/>
</dbReference>
<dbReference type="GO" id="GO:0022625">
    <property type="term" value="C:cytosolic large ribosomal subunit"/>
    <property type="evidence" value="ECO:0007669"/>
    <property type="project" value="TreeGrafter"/>
</dbReference>
<dbReference type="GO" id="GO:0019843">
    <property type="term" value="F:rRNA binding"/>
    <property type="evidence" value="ECO:0007669"/>
    <property type="project" value="UniProtKB-UniRule"/>
</dbReference>
<dbReference type="GO" id="GO:0003735">
    <property type="term" value="F:structural constituent of ribosome"/>
    <property type="evidence" value="ECO:0007669"/>
    <property type="project" value="InterPro"/>
</dbReference>
<dbReference type="GO" id="GO:0000049">
    <property type="term" value="F:tRNA binding"/>
    <property type="evidence" value="ECO:0007669"/>
    <property type="project" value="UniProtKB-KW"/>
</dbReference>
<dbReference type="GO" id="GO:0006417">
    <property type="term" value="P:regulation of translation"/>
    <property type="evidence" value="ECO:0007669"/>
    <property type="project" value="UniProtKB-KW"/>
</dbReference>
<dbReference type="GO" id="GO:0006412">
    <property type="term" value="P:translation"/>
    <property type="evidence" value="ECO:0007669"/>
    <property type="project" value="UniProtKB-UniRule"/>
</dbReference>
<dbReference type="CDD" id="cd00403">
    <property type="entry name" value="Ribosomal_L1"/>
    <property type="match status" value="1"/>
</dbReference>
<dbReference type="FunFam" id="3.40.50.790:FF:000001">
    <property type="entry name" value="50S ribosomal protein L1"/>
    <property type="match status" value="1"/>
</dbReference>
<dbReference type="Gene3D" id="3.30.190.20">
    <property type="match status" value="1"/>
</dbReference>
<dbReference type="Gene3D" id="3.40.50.790">
    <property type="match status" value="1"/>
</dbReference>
<dbReference type="HAMAP" id="MF_01318_B">
    <property type="entry name" value="Ribosomal_uL1_B"/>
    <property type="match status" value="1"/>
</dbReference>
<dbReference type="InterPro" id="IPR005878">
    <property type="entry name" value="Ribosom_uL1_bac-type"/>
</dbReference>
<dbReference type="InterPro" id="IPR002143">
    <property type="entry name" value="Ribosomal_uL1"/>
</dbReference>
<dbReference type="InterPro" id="IPR023674">
    <property type="entry name" value="Ribosomal_uL1-like"/>
</dbReference>
<dbReference type="InterPro" id="IPR028364">
    <property type="entry name" value="Ribosomal_uL1/biogenesis"/>
</dbReference>
<dbReference type="InterPro" id="IPR016095">
    <property type="entry name" value="Ribosomal_uL1_3-a/b-sand"/>
</dbReference>
<dbReference type="InterPro" id="IPR023673">
    <property type="entry name" value="Ribosomal_uL1_CS"/>
</dbReference>
<dbReference type="NCBIfam" id="TIGR01169">
    <property type="entry name" value="rplA_bact"/>
    <property type="match status" value="1"/>
</dbReference>
<dbReference type="PANTHER" id="PTHR36427">
    <property type="entry name" value="54S RIBOSOMAL PROTEIN L1, MITOCHONDRIAL"/>
    <property type="match status" value="1"/>
</dbReference>
<dbReference type="PANTHER" id="PTHR36427:SF3">
    <property type="entry name" value="LARGE RIBOSOMAL SUBUNIT PROTEIN UL1M"/>
    <property type="match status" value="1"/>
</dbReference>
<dbReference type="Pfam" id="PF00687">
    <property type="entry name" value="Ribosomal_L1"/>
    <property type="match status" value="1"/>
</dbReference>
<dbReference type="PIRSF" id="PIRSF002155">
    <property type="entry name" value="Ribosomal_L1"/>
    <property type="match status" value="1"/>
</dbReference>
<dbReference type="SUPFAM" id="SSF56808">
    <property type="entry name" value="Ribosomal protein L1"/>
    <property type="match status" value="1"/>
</dbReference>
<dbReference type="PROSITE" id="PS01199">
    <property type="entry name" value="RIBOSOMAL_L1"/>
    <property type="match status" value="1"/>
</dbReference>
<protein>
    <recommendedName>
        <fullName evidence="1">Large ribosomal subunit protein uL1</fullName>
    </recommendedName>
    <alternativeName>
        <fullName evidence="2">50S ribosomal protein L1</fullName>
    </alternativeName>
</protein>
<sequence>MAKLTKRQKAIAEKVVAGKQYSFEEAAKLLAELSTIKFKESVDVAVNLGVDPRKSDQVVRGATVLPNGTGKSVRVAVFTQGPAAEAALAAGADKVGMDELAAEMKGGDLNYDVVIASPDAMRVVGQLGQILGPRGLMPNPKVGTVTPDVATAVKNAKAGQVRFRTDKNGIIHSSVGKVDFEPAKLQQNVEALLADLKRLKPSSSKGVYVKRVTLSTTMGPGLQIDLASLEA</sequence>
<comment type="function">
    <text evidence="1">Binds directly to 23S rRNA. The L1 stalk is quite mobile in the ribosome, and is involved in E site tRNA release.</text>
</comment>
<comment type="function">
    <text evidence="1">Protein L1 is also a translational repressor protein, it controls the translation of the L11 operon by binding to its mRNA.</text>
</comment>
<comment type="subunit">
    <text evidence="1">Part of the 50S ribosomal subunit.</text>
</comment>
<comment type="similarity">
    <text evidence="1">Belongs to the universal ribosomal protein uL1 family.</text>
</comment>
<keyword id="KW-0678">Repressor</keyword>
<keyword id="KW-0687">Ribonucleoprotein</keyword>
<keyword id="KW-0689">Ribosomal protein</keyword>
<keyword id="KW-0694">RNA-binding</keyword>
<keyword id="KW-0699">rRNA-binding</keyword>
<keyword id="KW-0810">Translation regulation</keyword>
<keyword id="KW-0820">tRNA-binding</keyword>
<reference key="1">
    <citation type="submission" date="2007-06" db="EMBL/GenBank/DDBJ databases">
        <authorList>
            <person name="Dodson R.J."/>
            <person name="Harkins D."/>
            <person name="Paulsen I.T."/>
        </authorList>
    </citation>
    <scope>NUCLEOTIDE SEQUENCE [LARGE SCALE GENOMIC DNA]</scope>
    <source>
        <strain>DSM 24068 / PA7</strain>
    </source>
</reference>